<reference key="1">
    <citation type="journal article" date="2007" name="J. Bacteriol.">
        <title>The complete genome sequence of Campylobacter jejuni strain 81116 (NCTC11828).</title>
        <authorList>
            <person name="Pearson B.M."/>
            <person name="Gaskin D.J.H."/>
            <person name="Segers R.P.A.M."/>
            <person name="Wells J.M."/>
            <person name="Nuijten P.J.M."/>
            <person name="van Vliet A.H.M."/>
        </authorList>
    </citation>
    <scope>NUCLEOTIDE SEQUENCE [LARGE SCALE GENOMIC DNA]</scope>
    <source>
        <strain>81116 / NCTC 11828</strain>
    </source>
</reference>
<evidence type="ECO:0000255" key="1">
    <source>
        <dbReference type="HAMAP-Rule" id="MF_00332"/>
    </source>
</evidence>
<evidence type="ECO:0000256" key="2">
    <source>
        <dbReference type="SAM" id="MobiDB-lite"/>
    </source>
</evidence>
<organism>
    <name type="scientific">Campylobacter jejuni subsp. jejuni serotype O:6 (strain 81116 / NCTC 11828)</name>
    <dbReference type="NCBI Taxonomy" id="407148"/>
    <lineage>
        <taxon>Bacteria</taxon>
        <taxon>Pseudomonadati</taxon>
        <taxon>Campylobacterota</taxon>
        <taxon>Epsilonproteobacteria</taxon>
        <taxon>Campylobacterales</taxon>
        <taxon>Campylobacteraceae</taxon>
        <taxon>Campylobacter</taxon>
    </lineage>
</organism>
<protein>
    <recommendedName>
        <fullName evidence="1">Chaperone protein DnaK</fullName>
    </recommendedName>
    <alternativeName>
        <fullName evidence="1">HSP70</fullName>
    </alternativeName>
    <alternativeName>
        <fullName evidence="1">Heat shock 70 kDa protein</fullName>
    </alternativeName>
    <alternativeName>
        <fullName evidence="1">Heat shock protein 70</fullName>
    </alternativeName>
</protein>
<name>DNAK_CAMJ8</name>
<feature type="chain" id="PRO_1000072034" description="Chaperone protein DnaK">
    <location>
        <begin position="1"/>
        <end position="623"/>
    </location>
</feature>
<feature type="region of interest" description="Disordered" evidence="2">
    <location>
        <begin position="595"/>
        <end position="623"/>
    </location>
</feature>
<feature type="compositionally biased region" description="Basic and acidic residues" evidence="2">
    <location>
        <begin position="595"/>
        <end position="615"/>
    </location>
</feature>
<feature type="modified residue" description="Phosphothreonine; by autocatalysis" evidence="1">
    <location>
        <position position="197"/>
    </location>
</feature>
<comment type="function">
    <text evidence="1">Acts as a chaperone.</text>
</comment>
<comment type="induction">
    <text evidence="1">By stress conditions e.g. heat shock.</text>
</comment>
<comment type="similarity">
    <text evidence="1">Belongs to the heat shock protein 70 family.</text>
</comment>
<keyword id="KW-0067">ATP-binding</keyword>
<keyword id="KW-0143">Chaperone</keyword>
<keyword id="KW-0547">Nucleotide-binding</keyword>
<keyword id="KW-0597">Phosphoprotein</keyword>
<keyword id="KW-0346">Stress response</keyword>
<sequence>MSKVIGIDLGTTNSCVAVYERGESKVIPNKEGKNTTPSVVAFTDKGEVLVGDSAKRQAVTNPEKTIYSIKRIMGLMINEDAAKEAKNRLPYHITERNGACAIEIAGKIYTPQEISAKVLMKLKEDAEAFLGESVVDAVITVPAYFNDAQRKATKEAGTIAGLNVLRIINEPTSAALAYGLDKKDSEKIVVYDLGGGTFDVTVLETGDNVVEVLATGGNAFLGGDDFDNKLIDFLANEFKDETGIDLKNDVMALQRLKEAAENAKKELSSANETEINLPFITADASGPKHLVKKLTRAKFEGMIDSLVAETITKINEVVSDAGLKKDEIKEIVMVGGSTRVPLVQEEVKKAFNKDLNKSVNPDEVVAIGAAIQGAVIKGDVKDVLLLDVTPLSLGIETLGGVMTKIIEKGTTIPTKKEQVFSTAEDNQSAVTINVLQGEREFSRDNKSLGNFNLEGIPPAPRGMPQIEVTFDIDANGILTVSAKDKATGKAQEIKITGSSGLSEEEINNMVKDAELHKEEDKKRKEAVDARNAADSLAHQVEKSLSELGEKVAAADKENIQKALDDLRETLKNQNASKEEIESKMKALSEVSHKLAENMYKKDEPNTANDKKKKDDDVIDAEVE</sequence>
<dbReference type="EMBL" id="CP000814">
    <property type="protein sequence ID" value="ABV52309.1"/>
    <property type="molecule type" value="Genomic_DNA"/>
</dbReference>
<dbReference type="RefSeq" id="WP_002856760.1">
    <property type="nucleotide sequence ID" value="NC_009839.1"/>
</dbReference>
<dbReference type="SMR" id="A8FLH2"/>
<dbReference type="KEGG" id="cju:C8J_0710"/>
<dbReference type="HOGENOM" id="CLU_005965_2_4_7"/>
<dbReference type="GO" id="GO:0005524">
    <property type="term" value="F:ATP binding"/>
    <property type="evidence" value="ECO:0007669"/>
    <property type="project" value="UniProtKB-UniRule"/>
</dbReference>
<dbReference type="GO" id="GO:0140662">
    <property type="term" value="F:ATP-dependent protein folding chaperone"/>
    <property type="evidence" value="ECO:0007669"/>
    <property type="project" value="InterPro"/>
</dbReference>
<dbReference type="GO" id="GO:0051082">
    <property type="term" value="F:unfolded protein binding"/>
    <property type="evidence" value="ECO:0007669"/>
    <property type="project" value="InterPro"/>
</dbReference>
<dbReference type="CDD" id="cd10234">
    <property type="entry name" value="ASKHA_NBD_HSP70_DnaK-like"/>
    <property type="match status" value="1"/>
</dbReference>
<dbReference type="FunFam" id="2.60.34.10:FF:000014">
    <property type="entry name" value="Chaperone protein DnaK HSP70"/>
    <property type="match status" value="1"/>
</dbReference>
<dbReference type="FunFam" id="1.20.1270.10:FF:000001">
    <property type="entry name" value="Molecular chaperone DnaK"/>
    <property type="match status" value="1"/>
</dbReference>
<dbReference type="FunFam" id="3.30.420.40:FF:000004">
    <property type="entry name" value="Molecular chaperone DnaK"/>
    <property type="match status" value="1"/>
</dbReference>
<dbReference type="FunFam" id="3.90.640.10:FF:000003">
    <property type="entry name" value="Molecular chaperone DnaK"/>
    <property type="match status" value="1"/>
</dbReference>
<dbReference type="Gene3D" id="1.20.1270.10">
    <property type="match status" value="1"/>
</dbReference>
<dbReference type="Gene3D" id="3.30.420.40">
    <property type="match status" value="2"/>
</dbReference>
<dbReference type="Gene3D" id="3.90.640.10">
    <property type="entry name" value="Actin, Chain A, domain 4"/>
    <property type="match status" value="1"/>
</dbReference>
<dbReference type="Gene3D" id="2.60.34.10">
    <property type="entry name" value="Substrate Binding Domain Of DNAk, Chain A, domain 1"/>
    <property type="match status" value="1"/>
</dbReference>
<dbReference type="HAMAP" id="MF_00332">
    <property type="entry name" value="DnaK"/>
    <property type="match status" value="1"/>
</dbReference>
<dbReference type="InterPro" id="IPR043129">
    <property type="entry name" value="ATPase_NBD"/>
</dbReference>
<dbReference type="InterPro" id="IPR012725">
    <property type="entry name" value="Chaperone_DnaK"/>
</dbReference>
<dbReference type="InterPro" id="IPR018181">
    <property type="entry name" value="Heat_shock_70_CS"/>
</dbReference>
<dbReference type="InterPro" id="IPR029048">
    <property type="entry name" value="HSP70_C_sf"/>
</dbReference>
<dbReference type="InterPro" id="IPR029047">
    <property type="entry name" value="HSP70_peptide-bd_sf"/>
</dbReference>
<dbReference type="InterPro" id="IPR013126">
    <property type="entry name" value="Hsp_70_fam"/>
</dbReference>
<dbReference type="NCBIfam" id="NF001413">
    <property type="entry name" value="PRK00290.1"/>
    <property type="match status" value="1"/>
</dbReference>
<dbReference type="NCBIfam" id="NF003520">
    <property type="entry name" value="PRK05183.1"/>
    <property type="match status" value="1"/>
</dbReference>
<dbReference type="NCBIfam" id="TIGR02350">
    <property type="entry name" value="prok_dnaK"/>
    <property type="match status" value="1"/>
</dbReference>
<dbReference type="PANTHER" id="PTHR19375">
    <property type="entry name" value="HEAT SHOCK PROTEIN 70KDA"/>
    <property type="match status" value="1"/>
</dbReference>
<dbReference type="Pfam" id="PF00012">
    <property type="entry name" value="HSP70"/>
    <property type="match status" value="1"/>
</dbReference>
<dbReference type="PRINTS" id="PR00301">
    <property type="entry name" value="HEATSHOCK70"/>
</dbReference>
<dbReference type="SUPFAM" id="SSF53067">
    <property type="entry name" value="Actin-like ATPase domain"/>
    <property type="match status" value="2"/>
</dbReference>
<dbReference type="SUPFAM" id="SSF100934">
    <property type="entry name" value="Heat shock protein 70kD (HSP70), C-terminal subdomain"/>
    <property type="match status" value="1"/>
</dbReference>
<dbReference type="SUPFAM" id="SSF100920">
    <property type="entry name" value="Heat shock protein 70kD (HSP70), peptide-binding domain"/>
    <property type="match status" value="1"/>
</dbReference>
<dbReference type="PROSITE" id="PS00297">
    <property type="entry name" value="HSP70_1"/>
    <property type="match status" value="1"/>
</dbReference>
<dbReference type="PROSITE" id="PS00329">
    <property type="entry name" value="HSP70_2"/>
    <property type="match status" value="1"/>
</dbReference>
<dbReference type="PROSITE" id="PS01036">
    <property type="entry name" value="HSP70_3"/>
    <property type="match status" value="1"/>
</dbReference>
<accession>A8FLH2</accession>
<proteinExistence type="inferred from homology"/>
<gene>
    <name evidence="1" type="primary">dnaK</name>
    <name type="ordered locus">C8J_0710</name>
</gene>